<keyword id="KW-0903">Direct protein sequencing</keyword>
<keyword id="KW-1214">G-protein coupled acetylcholine receptor impairing toxin</keyword>
<keyword id="KW-1213">G-protein coupled receptor impairing toxin</keyword>
<keyword id="KW-0382">Hypotensive agent</keyword>
<keyword id="KW-0481">Metalloenzyme inhibitor</keyword>
<keyword id="KW-0483">Metalloprotease inhibitor</keyword>
<keyword id="KW-0646">Protease inhibitor</keyword>
<keyword id="KW-0964">Secreted</keyword>
<keyword id="KW-0800">Toxin</keyword>
<name>NDB11_TITSE</name>
<reference key="1">
    <citation type="journal article" date="1993" name="Toxicon">
        <title>Peptide T, a novel bradykinin potentiator isolated from Tityus serrulatus scorpion venom.</title>
        <authorList>
            <person name="Ferreira L.A.F."/>
            <person name="Alves E.W."/>
            <person name="Henriques O.B."/>
        </authorList>
    </citation>
    <scope>PROTEIN SEQUENCE</scope>
    <scope>FUNCTION</scope>
    <scope>SUBCELLULAR LOCATION</scope>
    <source>
        <tissue>Venom</tissue>
    </source>
</reference>
<reference key="2">
    <citation type="journal article" date="2017" name="Peptides">
        <title>Moving pieces in a cryptomic puzzle: cryptide from Tityus serrulatus Ts3 Nav toxin as potential agonist of muscarinic receptors.</title>
        <authorList>
            <person name="Rocha-Resende C."/>
            <person name="Leao N.M."/>
            <person name="de Lima M.E."/>
            <person name="Santos R.A."/>
            <person name="Pimenta A.M.C."/>
            <person name="Verano-Braga T."/>
        </authorList>
    </citation>
    <scope>FUNCTION</scope>
    <scope>BIOASSAY</scope>
    <scope>SYNTHESIS</scope>
</reference>
<reference key="3">
    <citation type="journal article" date="2005" name="IUBMB Life">
        <title>Scorpion venom peptides without disulfide bridges.</title>
        <authorList>
            <person name="Zeng X.C."/>
            <person name="Corzo G."/>
            <person name="Hahin R."/>
        </authorList>
    </citation>
    <scope>NOMENCLATURE</scope>
</reference>
<reference key="4">
    <citation type="journal article" date="2009" name="Protein Pept. Lett.">
        <title>Tityus serrulatus scorpion venom and toxins: an overview.</title>
        <authorList>
            <person name="Cologna C.T."/>
            <person name="Marcussi S."/>
            <person name="Giglio J.R."/>
            <person name="Soares A.M."/>
            <person name="Arantes E.C."/>
        </authorList>
    </citation>
    <scope>NOMENCLATURE</scope>
</reference>
<reference key="5">
    <citation type="journal article" date="2014" name="Peptides">
        <title>Scorpion venom peptides with no disulfide bridges: a review.</title>
        <authorList>
            <person name="Almaaytah A."/>
            <person name="Albalas Q."/>
        </authorList>
    </citation>
    <scope>NOMENCLATURE</scope>
</reference>
<accession>Q9TWR4</accession>
<organism>
    <name type="scientific">Tityus serrulatus</name>
    <name type="common">Brazilian scorpion</name>
    <dbReference type="NCBI Taxonomy" id="6887"/>
    <lineage>
        <taxon>Eukaryota</taxon>
        <taxon>Metazoa</taxon>
        <taxon>Ecdysozoa</taxon>
        <taxon>Arthropoda</taxon>
        <taxon>Chelicerata</taxon>
        <taxon>Arachnida</taxon>
        <taxon>Scorpiones</taxon>
        <taxon>Buthida</taxon>
        <taxon>Buthoidea</taxon>
        <taxon>Buthidae</taxon>
        <taxon>Tityus</taxon>
    </lineage>
</organism>
<sequence length="13" mass="1604">KKDGYPVEYDRAY</sequence>
<evidence type="ECO:0000269" key="1">
    <source>
    </source>
</evidence>
<evidence type="ECO:0000269" key="2">
    <source>
    </source>
</evidence>
<evidence type="ECO:0000303" key="3">
    <source>
    </source>
</evidence>
<evidence type="ECO:0000303" key="4">
    <source>
    </source>
</evidence>
<evidence type="ECO:0000303" key="5">
    <source>
    </source>
</evidence>
<evidence type="ECO:0000303" key="6">
    <source>
    </source>
</evidence>
<evidence type="ECO:0000305" key="7"/>
<protein>
    <recommendedName>
        <fullName evidence="6">Bradykinin-potentiating peptide T</fullName>
        <shortName evidence="6">BPP-T</shortName>
    </recommendedName>
    <alternativeName>
        <fullName evidence="3 5 7">Cryptide Ts10</fullName>
    </alternativeName>
    <alternativeName>
        <fullName evidence="4 6">Non-disulfide-bridged peptide 1.1</fullName>
        <shortName evidence="4 6">NDBP-1.1</shortName>
    </alternativeName>
</protein>
<proteinExistence type="evidence at protein level"/>
<comment type="function">
    <text evidence="1">Acts as a bradykinin-potentiating peptide (BPP). Induces endothelium-dependent vasodilation that is reverted by NO synthase inhibitor, suggesting it activates molecular targets on vascular endothelium leading to NO production and vasodilation. It appears to induce vasodilation through muscarinic acetylcholine receptor (AChR) M2 (CHRM2). Does not inhibit the angiotensin-converting enzyme (ACE). Does not act via bradykinin B2 receptor.</text>
</comment>
<comment type="subcellular location">
    <subcellularLocation>
        <location evidence="2">Secreted</location>
    </subcellularLocation>
</comment>
<comment type="tissue specificity">
    <text evidence="7">Expressed by the venom gland.</text>
</comment>
<comment type="similarity">
    <text evidence="7">Belongs to the non-disulfide-bridged peptide (NDBP) superfamily. Scorpion BPP (group 1) family.</text>
</comment>
<comment type="caution">
    <text evidence="7">The activity on angiotensin-converting enzyme (ACE) is controversial. While the peptide is described as having ACE inhibitory activity in PubMed:8212046, this activity is not reported in PubMed:28041976.</text>
</comment>
<dbReference type="GO" id="GO:0005576">
    <property type="term" value="C:extracellular region"/>
    <property type="evidence" value="ECO:0007669"/>
    <property type="project" value="UniProtKB-SubCell"/>
</dbReference>
<dbReference type="GO" id="GO:0030414">
    <property type="term" value="F:peptidase inhibitor activity"/>
    <property type="evidence" value="ECO:0007669"/>
    <property type="project" value="UniProtKB-KW"/>
</dbReference>
<dbReference type="GO" id="GO:0090729">
    <property type="term" value="F:toxin activity"/>
    <property type="evidence" value="ECO:0007669"/>
    <property type="project" value="UniProtKB-KW"/>
</dbReference>
<dbReference type="GO" id="GO:0008217">
    <property type="term" value="P:regulation of blood pressure"/>
    <property type="evidence" value="ECO:0007669"/>
    <property type="project" value="UniProtKB-KW"/>
</dbReference>
<feature type="peptide" id="PRO_0000343196" description="Bradykinin-potentiating peptide T">
    <location>
        <begin position="1"/>
        <end position="13"/>
    </location>
</feature>